<keyword id="KW-0479">Metal-binding</keyword>
<keyword id="KW-1185">Reference proteome</keyword>
<keyword id="KW-0687">Ribonucleoprotein</keyword>
<keyword id="KW-0689">Ribosomal protein</keyword>
<keyword id="KW-0694">RNA-binding</keyword>
<keyword id="KW-0699">rRNA-binding</keyword>
<keyword id="KW-0862">Zinc</keyword>
<proteinExistence type="inferred from homology"/>
<reference key="1">
    <citation type="submission" date="2004-06" db="EMBL/GenBank/DDBJ databases">
        <authorList>
            <person name="Birren B.W."/>
            <person name="Stange-Thomann N."/>
            <person name="Hafez N."/>
            <person name="DeCaprio D."/>
            <person name="Fisher S."/>
            <person name="Butler J."/>
            <person name="Elkins T."/>
            <person name="Kodira C.D."/>
            <person name="Major J."/>
            <person name="Wang S."/>
            <person name="Nicol R."/>
            <person name="Nusbaum C."/>
        </authorList>
    </citation>
    <scope>NUCLEOTIDE SEQUENCE [LARGE SCALE GENOMIC DNA]</scope>
    <source>
        <strain>ATCC 33453 / NBRC 100688 / NCTC 11704 / L1</strain>
    </source>
</reference>
<evidence type="ECO:0000255" key="1">
    <source>
        <dbReference type="HAMAP-Rule" id="MF_01364"/>
    </source>
</evidence>
<evidence type="ECO:0000305" key="2"/>
<dbReference type="EMBL" id="AE017263">
    <property type="protein sequence ID" value="AAT75492.1"/>
    <property type="molecule type" value="Genomic_DNA"/>
</dbReference>
<dbReference type="RefSeq" id="WP_011183033.1">
    <property type="nucleotide sequence ID" value="NC_006055.1"/>
</dbReference>
<dbReference type="RefSeq" id="YP_053376.1">
    <property type="nucleotide sequence ID" value="NC_006055.1"/>
</dbReference>
<dbReference type="SMR" id="Q6F1Y1"/>
<dbReference type="STRING" id="265311.Mfl136"/>
<dbReference type="PaxDb" id="265311-Mfl136"/>
<dbReference type="EnsemblBacteria" id="AAT75492">
    <property type="protein sequence ID" value="AAT75492"/>
    <property type="gene ID" value="Mfl136"/>
</dbReference>
<dbReference type="GeneID" id="2898245"/>
<dbReference type="KEGG" id="mfl:Mfl136"/>
<dbReference type="PATRIC" id="fig|265311.5.peg.137"/>
<dbReference type="eggNOG" id="COG0199">
    <property type="taxonomic scope" value="Bacteria"/>
</dbReference>
<dbReference type="HOGENOM" id="CLU_139869_3_0_14"/>
<dbReference type="OrthoDB" id="9810484at2"/>
<dbReference type="Proteomes" id="UP000006647">
    <property type="component" value="Chromosome"/>
</dbReference>
<dbReference type="GO" id="GO:0005737">
    <property type="term" value="C:cytoplasm"/>
    <property type="evidence" value="ECO:0007669"/>
    <property type="project" value="UniProtKB-ARBA"/>
</dbReference>
<dbReference type="GO" id="GO:0015935">
    <property type="term" value="C:small ribosomal subunit"/>
    <property type="evidence" value="ECO:0007669"/>
    <property type="project" value="TreeGrafter"/>
</dbReference>
<dbReference type="GO" id="GO:0019843">
    <property type="term" value="F:rRNA binding"/>
    <property type="evidence" value="ECO:0007669"/>
    <property type="project" value="UniProtKB-UniRule"/>
</dbReference>
<dbReference type="GO" id="GO:0003735">
    <property type="term" value="F:structural constituent of ribosome"/>
    <property type="evidence" value="ECO:0007669"/>
    <property type="project" value="InterPro"/>
</dbReference>
<dbReference type="GO" id="GO:0008270">
    <property type="term" value="F:zinc ion binding"/>
    <property type="evidence" value="ECO:0007669"/>
    <property type="project" value="UniProtKB-UniRule"/>
</dbReference>
<dbReference type="GO" id="GO:0006412">
    <property type="term" value="P:translation"/>
    <property type="evidence" value="ECO:0007669"/>
    <property type="project" value="UniProtKB-UniRule"/>
</dbReference>
<dbReference type="FunFam" id="4.10.830.10:FF:000001">
    <property type="entry name" value="30S ribosomal protein S14 type Z"/>
    <property type="match status" value="1"/>
</dbReference>
<dbReference type="Gene3D" id="4.10.830.10">
    <property type="entry name" value="30s Ribosomal Protein S14, Chain N"/>
    <property type="match status" value="1"/>
</dbReference>
<dbReference type="HAMAP" id="MF_01364_B">
    <property type="entry name" value="Ribosomal_uS14_2_B"/>
    <property type="match status" value="1"/>
</dbReference>
<dbReference type="InterPro" id="IPR001209">
    <property type="entry name" value="Ribosomal_uS14"/>
</dbReference>
<dbReference type="InterPro" id="IPR023053">
    <property type="entry name" value="Ribosomal_uS14_bact"/>
</dbReference>
<dbReference type="InterPro" id="IPR018271">
    <property type="entry name" value="Ribosomal_uS14_CS"/>
</dbReference>
<dbReference type="InterPro" id="IPR043140">
    <property type="entry name" value="Ribosomal_uS14_sf"/>
</dbReference>
<dbReference type="NCBIfam" id="NF005974">
    <property type="entry name" value="PRK08061.1"/>
    <property type="match status" value="1"/>
</dbReference>
<dbReference type="PANTHER" id="PTHR19836">
    <property type="entry name" value="30S RIBOSOMAL PROTEIN S14"/>
    <property type="match status" value="1"/>
</dbReference>
<dbReference type="PANTHER" id="PTHR19836:SF19">
    <property type="entry name" value="SMALL RIBOSOMAL SUBUNIT PROTEIN US14M"/>
    <property type="match status" value="1"/>
</dbReference>
<dbReference type="Pfam" id="PF00253">
    <property type="entry name" value="Ribosomal_S14"/>
    <property type="match status" value="1"/>
</dbReference>
<dbReference type="SUPFAM" id="SSF57716">
    <property type="entry name" value="Glucocorticoid receptor-like (DNA-binding domain)"/>
    <property type="match status" value="1"/>
</dbReference>
<dbReference type="PROSITE" id="PS00527">
    <property type="entry name" value="RIBOSOMAL_S14"/>
    <property type="match status" value="1"/>
</dbReference>
<gene>
    <name evidence="1" type="primary">rpsZ</name>
    <name evidence="1" type="synonym">rpsN</name>
    <name type="ordered locus">Mfl136</name>
</gene>
<accession>Q6F1Y1</accession>
<protein>
    <recommendedName>
        <fullName evidence="1">Small ribosomal subunit protein uS14</fullName>
    </recommendedName>
    <alternativeName>
        <fullName evidence="2">30S ribosomal protein S14 type Z</fullName>
    </alternativeName>
</protein>
<feature type="chain" id="PRO_0000269114" description="Small ribosomal subunit protein uS14">
    <location>
        <begin position="1"/>
        <end position="61"/>
    </location>
</feature>
<feature type="binding site" evidence="1">
    <location>
        <position position="24"/>
    </location>
    <ligand>
        <name>Zn(2+)</name>
        <dbReference type="ChEBI" id="CHEBI:29105"/>
    </ligand>
</feature>
<feature type="binding site" evidence="1">
    <location>
        <position position="27"/>
    </location>
    <ligand>
        <name>Zn(2+)</name>
        <dbReference type="ChEBI" id="CHEBI:29105"/>
    </ligand>
</feature>
<feature type="binding site" evidence="1">
    <location>
        <position position="40"/>
    </location>
    <ligand>
        <name>Zn(2+)</name>
        <dbReference type="ChEBI" id="CHEBI:29105"/>
    </ligand>
</feature>
<feature type="binding site" evidence="1">
    <location>
        <position position="43"/>
    </location>
    <ligand>
        <name>Zn(2+)</name>
        <dbReference type="ChEBI" id="CHEBI:29105"/>
    </ligand>
</feature>
<name>RS14Z_MESFL</name>
<comment type="function">
    <text evidence="1">Binds 16S rRNA, required for the assembly of 30S particles and may also be responsible for determining the conformation of the 16S rRNA at the A site.</text>
</comment>
<comment type="cofactor">
    <cofactor evidence="1">
        <name>Zn(2+)</name>
        <dbReference type="ChEBI" id="CHEBI:29105"/>
    </cofactor>
    <text evidence="1">Binds 1 zinc ion per subunit.</text>
</comment>
<comment type="subunit">
    <text evidence="1">Part of the 30S ribosomal subunit. Contacts proteins S3 and S10.</text>
</comment>
<comment type="similarity">
    <text evidence="1">Belongs to the universal ribosomal protein uS14 family. Zinc-binding uS14 subfamily.</text>
</comment>
<sequence>MAKKSLKVKQAKHQKFGVRNYTRCNNCGRPHAVLKKFGICRLCFRKYAYEGQIPGIRKASW</sequence>
<organism>
    <name type="scientific">Mesoplasma florum (strain ATCC 33453 / NBRC 100688 / NCTC 11704 / L1)</name>
    <name type="common">Acholeplasma florum</name>
    <dbReference type="NCBI Taxonomy" id="265311"/>
    <lineage>
        <taxon>Bacteria</taxon>
        <taxon>Bacillati</taxon>
        <taxon>Mycoplasmatota</taxon>
        <taxon>Mollicutes</taxon>
        <taxon>Entomoplasmatales</taxon>
        <taxon>Entomoplasmataceae</taxon>
        <taxon>Mesoplasma</taxon>
    </lineage>
</organism>